<proteinExistence type="inferred from homology"/>
<name>SEPF_PROMS</name>
<keyword id="KW-0131">Cell cycle</keyword>
<keyword id="KW-0132">Cell division</keyword>
<keyword id="KW-0963">Cytoplasm</keyword>
<keyword id="KW-0717">Septation</keyword>
<evidence type="ECO:0000255" key="1">
    <source>
        <dbReference type="HAMAP-Rule" id="MF_01197"/>
    </source>
</evidence>
<evidence type="ECO:0000256" key="2">
    <source>
        <dbReference type="SAM" id="MobiDB-lite"/>
    </source>
</evidence>
<gene>
    <name evidence="1" type="primary">sepF</name>
    <name type="ordered locus">A9601_04461</name>
</gene>
<sequence length="191" mass="20913">MSLISRLKAVVAGDEYLDDDFDELDYPSEDELNDINNFKQNPKNSNALANSNPFDFMNNNRSSKVVGMPGISNSSSEVSLMEPRSFDEMPQAIQALRERKTVILNLTMMDPDQAQRAVDFIAGGTYAIDGHQERVGESIFLFAPSCVNVTSSSPEEASPSSVSTENTPQYSLGKNTTPEPAWGNSKLSAYS</sequence>
<reference key="1">
    <citation type="journal article" date="2007" name="PLoS Genet.">
        <title>Patterns and implications of gene gain and loss in the evolution of Prochlorococcus.</title>
        <authorList>
            <person name="Kettler G.C."/>
            <person name="Martiny A.C."/>
            <person name="Huang K."/>
            <person name="Zucker J."/>
            <person name="Coleman M.L."/>
            <person name="Rodrigue S."/>
            <person name="Chen F."/>
            <person name="Lapidus A."/>
            <person name="Ferriera S."/>
            <person name="Johnson J."/>
            <person name="Steglich C."/>
            <person name="Church G.M."/>
            <person name="Richardson P."/>
            <person name="Chisholm S.W."/>
        </authorList>
    </citation>
    <scope>NUCLEOTIDE SEQUENCE [LARGE SCALE GENOMIC DNA]</scope>
    <source>
        <strain>AS9601</strain>
    </source>
</reference>
<protein>
    <recommendedName>
        <fullName evidence="1">Cell division protein SepF</fullName>
    </recommendedName>
</protein>
<comment type="function">
    <text evidence="1">Cell division protein that is part of the divisome complex and is recruited early to the Z-ring. Probably stimulates Z-ring formation, perhaps through the cross-linking of FtsZ protofilaments. Its function overlaps with FtsA.</text>
</comment>
<comment type="subunit">
    <text evidence="1">Homodimer. Interacts with FtsZ.</text>
</comment>
<comment type="subcellular location">
    <subcellularLocation>
        <location evidence="1">Cytoplasm</location>
    </subcellularLocation>
    <text evidence="1">Localizes to the division site, in a FtsZ-dependent manner.</text>
</comment>
<comment type="similarity">
    <text evidence="1">Belongs to the SepF family.</text>
</comment>
<dbReference type="EMBL" id="CP000551">
    <property type="protein sequence ID" value="ABM69734.1"/>
    <property type="molecule type" value="Genomic_DNA"/>
</dbReference>
<dbReference type="RefSeq" id="WP_011817906.1">
    <property type="nucleotide sequence ID" value="NC_008816.1"/>
</dbReference>
<dbReference type="SMR" id="A2BPM3"/>
<dbReference type="STRING" id="146891.A9601_04461"/>
<dbReference type="KEGG" id="pmb:A9601_04461"/>
<dbReference type="eggNOG" id="COG1799">
    <property type="taxonomic scope" value="Bacteria"/>
</dbReference>
<dbReference type="HOGENOM" id="CLU_078499_1_0_3"/>
<dbReference type="OrthoDB" id="9815206at2"/>
<dbReference type="Proteomes" id="UP000002590">
    <property type="component" value="Chromosome"/>
</dbReference>
<dbReference type="GO" id="GO:0005737">
    <property type="term" value="C:cytoplasm"/>
    <property type="evidence" value="ECO:0007669"/>
    <property type="project" value="UniProtKB-SubCell"/>
</dbReference>
<dbReference type="GO" id="GO:0000917">
    <property type="term" value="P:division septum assembly"/>
    <property type="evidence" value="ECO:0007669"/>
    <property type="project" value="UniProtKB-KW"/>
</dbReference>
<dbReference type="GO" id="GO:0043093">
    <property type="term" value="P:FtsZ-dependent cytokinesis"/>
    <property type="evidence" value="ECO:0007669"/>
    <property type="project" value="UniProtKB-UniRule"/>
</dbReference>
<dbReference type="Gene3D" id="3.30.110.150">
    <property type="entry name" value="SepF-like protein"/>
    <property type="match status" value="1"/>
</dbReference>
<dbReference type="HAMAP" id="MF_01197">
    <property type="entry name" value="SepF"/>
    <property type="match status" value="1"/>
</dbReference>
<dbReference type="InterPro" id="IPR023052">
    <property type="entry name" value="Cell_div_SepF"/>
</dbReference>
<dbReference type="InterPro" id="IPR007561">
    <property type="entry name" value="Cell_div_SepF/SepF-rel"/>
</dbReference>
<dbReference type="InterPro" id="IPR038594">
    <property type="entry name" value="SepF-like_sf"/>
</dbReference>
<dbReference type="PANTHER" id="PTHR35798">
    <property type="entry name" value="CELL DIVISION PROTEIN SEPF"/>
    <property type="match status" value="1"/>
</dbReference>
<dbReference type="PANTHER" id="PTHR35798:SF1">
    <property type="entry name" value="CELL DIVISION PROTEIN SEPF"/>
    <property type="match status" value="1"/>
</dbReference>
<dbReference type="Pfam" id="PF04472">
    <property type="entry name" value="SepF"/>
    <property type="match status" value="1"/>
</dbReference>
<feature type="chain" id="PRO_0000334057" description="Cell division protein SepF">
    <location>
        <begin position="1"/>
        <end position="191"/>
    </location>
</feature>
<feature type="region of interest" description="Disordered" evidence="2">
    <location>
        <begin position="150"/>
        <end position="191"/>
    </location>
</feature>
<feature type="compositionally biased region" description="Low complexity" evidence="2">
    <location>
        <begin position="150"/>
        <end position="164"/>
    </location>
</feature>
<feature type="compositionally biased region" description="Polar residues" evidence="2">
    <location>
        <begin position="165"/>
        <end position="178"/>
    </location>
</feature>
<organism>
    <name type="scientific">Prochlorococcus marinus (strain AS9601)</name>
    <dbReference type="NCBI Taxonomy" id="146891"/>
    <lineage>
        <taxon>Bacteria</taxon>
        <taxon>Bacillati</taxon>
        <taxon>Cyanobacteriota</taxon>
        <taxon>Cyanophyceae</taxon>
        <taxon>Synechococcales</taxon>
        <taxon>Prochlorococcaceae</taxon>
        <taxon>Prochlorococcus</taxon>
    </lineage>
</organism>
<accession>A2BPM3</accession>